<keyword id="KW-0002">3D-structure</keyword>
<keyword id="KW-0007">Acetylation</keyword>
<keyword id="KW-0106">Calcium</keyword>
<keyword id="KW-0903">Direct protein sequencing</keyword>
<keyword id="KW-0479">Metal-binding</keyword>
<keyword id="KW-1267">Proteomics identification</keyword>
<keyword id="KW-1185">Reference proteome</keyword>
<keyword id="KW-0677">Repeat</keyword>
<name>CALL5_HUMAN</name>
<comment type="function">
    <text>Binds calcium. May be involved in terminal differentiation of keratinocytes.</text>
</comment>
<comment type="subunit">
    <text>Associates with transglutaminase 3.</text>
</comment>
<comment type="interaction">
    <interactant intactId="EBI-1051681">
        <id>Q9NZT1</id>
    </interactant>
    <interactant intactId="EBI-21870322">
        <id>Q9H3W5</id>
        <label>LRRN3</label>
    </interactant>
    <organismsDiffer>false</organismsDiffer>
    <experiments>2</experiments>
</comment>
<comment type="tissue specificity">
    <text>Particularly abundant in the epidermis where its expression is directly related to keratinocyte differentiation. Very low expression in lung.</text>
</comment>
<reference key="1">
    <citation type="journal article" date="2000" name="J. Biol. Chem.">
        <title>Identification and cloning of a new calmodulin-like protein from human epidermis.</title>
        <authorList>
            <person name="Mehul B."/>
            <person name="Bernard D."/>
            <person name="Simonetti L."/>
            <person name="Bernard M.A."/>
            <person name="Schmidt R."/>
        </authorList>
    </citation>
    <scope>NUCLEOTIDE SEQUENCE [MRNA]</scope>
    <scope>CHARACTERIZATION</scope>
    <scope>VARIANT ARG-74</scope>
    <source>
        <tissue>Skin</tissue>
    </source>
</reference>
<reference key="2">
    <citation type="journal article" date="2004" name="Nature">
        <title>The DNA sequence and comparative analysis of human chromosome 10.</title>
        <authorList>
            <person name="Deloukas P."/>
            <person name="Earthrowl M.E."/>
            <person name="Grafham D.V."/>
            <person name="Rubenfield M."/>
            <person name="French L."/>
            <person name="Steward C.A."/>
            <person name="Sims S.K."/>
            <person name="Jones M.C."/>
            <person name="Searle S."/>
            <person name="Scott C."/>
            <person name="Howe K."/>
            <person name="Hunt S.E."/>
            <person name="Andrews T.D."/>
            <person name="Gilbert J.G.R."/>
            <person name="Swarbreck D."/>
            <person name="Ashurst J.L."/>
            <person name="Taylor A."/>
            <person name="Battles J."/>
            <person name="Bird C.P."/>
            <person name="Ainscough R."/>
            <person name="Almeida J.P."/>
            <person name="Ashwell R.I.S."/>
            <person name="Ambrose K.D."/>
            <person name="Babbage A.K."/>
            <person name="Bagguley C.L."/>
            <person name="Bailey J."/>
            <person name="Banerjee R."/>
            <person name="Bates K."/>
            <person name="Beasley H."/>
            <person name="Bray-Allen S."/>
            <person name="Brown A.J."/>
            <person name="Brown J.Y."/>
            <person name="Burford D.C."/>
            <person name="Burrill W."/>
            <person name="Burton J."/>
            <person name="Cahill P."/>
            <person name="Camire D."/>
            <person name="Carter N.P."/>
            <person name="Chapman J.C."/>
            <person name="Clark S.Y."/>
            <person name="Clarke G."/>
            <person name="Clee C.M."/>
            <person name="Clegg S."/>
            <person name="Corby N."/>
            <person name="Coulson A."/>
            <person name="Dhami P."/>
            <person name="Dutta I."/>
            <person name="Dunn M."/>
            <person name="Faulkner L."/>
            <person name="Frankish A."/>
            <person name="Frankland J.A."/>
            <person name="Garner P."/>
            <person name="Garnett J."/>
            <person name="Gribble S."/>
            <person name="Griffiths C."/>
            <person name="Grocock R."/>
            <person name="Gustafson E."/>
            <person name="Hammond S."/>
            <person name="Harley J.L."/>
            <person name="Hart E."/>
            <person name="Heath P.D."/>
            <person name="Ho T.P."/>
            <person name="Hopkins B."/>
            <person name="Horne J."/>
            <person name="Howden P.J."/>
            <person name="Huckle E."/>
            <person name="Hynds C."/>
            <person name="Johnson C."/>
            <person name="Johnson D."/>
            <person name="Kana A."/>
            <person name="Kay M."/>
            <person name="Kimberley A.M."/>
            <person name="Kershaw J.K."/>
            <person name="Kokkinaki M."/>
            <person name="Laird G.K."/>
            <person name="Lawlor S."/>
            <person name="Lee H.M."/>
            <person name="Leongamornlert D.A."/>
            <person name="Laird G."/>
            <person name="Lloyd C."/>
            <person name="Lloyd D.M."/>
            <person name="Loveland J."/>
            <person name="Lovell J."/>
            <person name="McLaren S."/>
            <person name="McLay K.E."/>
            <person name="McMurray A."/>
            <person name="Mashreghi-Mohammadi M."/>
            <person name="Matthews L."/>
            <person name="Milne S."/>
            <person name="Nickerson T."/>
            <person name="Nguyen M."/>
            <person name="Overton-Larty E."/>
            <person name="Palmer S.A."/>
            <person name="Pearce A.V."/>
            <person name="Peck A.I."/>
            <person name="Pelan S."/>
            <person name="Phillimore B."/>
            <person name="Porter K."/>
            <person name="Rice C.M."/>
            <person name="Rogosin A."/>
            <person name="Ross M.T."/>
            <person name="Sarafidou T."/>
            <person name="Sehra H.K."/>
            <person name="Shownkeen R."/>
            <person name="Skuce C.D."/>
            <person name="Smith M."/>
            <person name="Standring L."/>
            <person name="Sycamore N."/>
            <person name="Tester J."/>
            <person name="Thorpe A."/>
            <person name="Torcasso W."/>
            <person name="Tracey A."/>
            <person name="Tromans A."/>
            <person name="Tsolas J."/>
            <person name="Wall M."/>
            <person name="Walsh J."/>
            <person name="Wang H."/>
            <person name="Weinstock K."/>
            <person name="West A.P."/>
            <person name="Willey D.L."/>
            <person name="Whitehead S.L."/>
            <person name="Wilming L."/>
            <person name="Wray P.W."/>
            <person name="Young L."/>
            <person name="Chen Y."/>
            <person name="Lovering R.C."/>
            <person name="Moschonas N.K."/>
            <person name="Siebert R."/>
            <person name="Fechtel K."/>
            <person name="Bentley D."/>
            <person name="Durbin R.M."/>
            <person name="Hubbard T."/>
            <person name="Doucette-Stamm L."/>
            <person name="Beck S."/>
            <person name="Smith D.R."/>
            <person name="Rogers J."/>
        </authorList>
    </citation>
    <scope>NUCLEOTIDE SEQUENCE [LARGE SCALE GENOMIC DNA]</scope>
</reference>
<reference key="3">
    <citation type="journal article" date="2004" name="Genome Res.">
        <title>The status, quality, and expansion of the NIH full-length cDNA project: the Mammalian Gene Collection (MGC).</title>
        <authorList>
            <consortium name="The MGC Project Team"/>
        </authorList>
    </citation>
    <scope>NUCLEOTIDE SEQUENCE [LARGE SCALE MRNA]</scope>
    <scope>VARIANTS GLY-58 AND ARG-74</scope>
    <source>
        <tissue>Skin</tissue>
    </source>
</reference>
<reference key="4">
    <citation type="submission" date="2008-02" db="UniProtKB">
        <authorList>
            <person name="Bienvenut W.V."/>
            <person name="Dhillon A.S."/>
            <person name="Kolch W."/>
        </authorList>
    </citation>
    <scope>PROTEIN SEQUENCE OF 2-50</scope>
    <scope>CLEAVAGE OF INITIATOR METHIONINE</scope>
    <scope>ACETYLATION AT ALA-2</scope>
    <scope>IDENTIFICATION BY MASS SPECTROMETRY</scope>
    <source>
        <tissue>Hepatoma</tissue>
    </source>
</reference>
<reference key="5">
    <citation type="journal article" date="2014" name="J. Proteomics">
        <title>An enzyme assisted RP-RPLC approach for in-depth analysis of human liver phosphoproteome.</title>
        <authorList>
            <person name="Bian Y."/>
            <person name="Song C."/>
            <person name="Cheng K."/>
            <person name="Dong M."/>
            <person name="Wang F."/>
            <person name="Huang J."/>
            <person name="Sun D."/>
            <person name="Wang L."/>
            <person name="Ye M."/>
            <person name="Zou H."/>
        </authorList>
    </citation>
    <scope>IDENTIFICATION BY MASS SPECTROMETRY [LARGE SCALE ANALYSIS]</scope>
    <source>
        <tissue>Liver</tissue>
    </source>
</reference>
<reference key="6">
    <citation type="journal article" date="2006" name="Structure">
        <title>A structural and dynamic characterization of the EF-hand protein CLSP.</title>
        <authorList>
            <person name="Babini E."/>
            <person name="Bertini I."/>
            <person name="Capozzi F."/>
            <person name="Chirivino E."/>
            <person name="Luchinat C."/>
        </authorList>
    </citation>
    <scope>STRUCTURE BY NMR OF 76-146</scope>
    <scope>CALCIUM-BINDING</scope>
</reference>
<reference key="7">
    <citation type="journal article" date="2007" name="J. Proteome Res.">
        <title>Detection and validation of non-synonymous coding SNPs from orthogonal analysis of shotgun proteomics data.</title>
        <authorList>
            <person name="Bunger M.K."/>
            <person name="Cargile B.J."/>
            <person name="Sevinsky J.R."/>
            <person name="Deyanova E."/>
            <person name="Yates N.A."/>
            <person name="Hendrickson R.C."/>
            <person name="Stephenson J.L. Jr."/>
        </authorList>
    </citation>
    <scope>VARIANTS GLY-58 AND ARG-74</scope>
    <scope>IDENTIFICATION BY MASS SPECTROMETRY</scope>
</reference>
<sequence length="146" mass="15893">MAGELTPEEEAQYKKAFSAVDTDGNGTINAQELGAALKATGKNLSEAQLRKLISEVDSDGDGEISFQEFLTAAKKARAGLEDLQVAFRAFDQDGDGHITVDELRRAMAGLGQPLPQEELDAMIREADVDQDGRVNYEEFARMLAQE</sequence>
<feature type="initiator methionine" description="Removed" evidence="5">
    <location>
        <position position="1"/>
    </location>
</feature>
<feature type="chain" id="PRO_0000073854" description="Calmodulin-like protein 5">
    <location>
        <begin position="2"/>
        <end position="146"/>
    </location>
</feature>
<feature type="domain" description="EF-hand 1" evidence="1">
    <location>
        <begin position="8"/>
        <end position="43"/>
    </location>
</feature>
<feature type="domain" description="EF-hand 2" evidence="1">
    <location>
        <begin position="44"/>
        <end position="74"/>
    </location>
</feature>
<feature type="domain" description="EF-hand 3" evidence="1">
    <location>
        <begin position="78"/>
        <end position="113"/>
    </location>
</feature>
<feature type="domain" description="EF-hand 4" evidence="1">
    <location>
        <begin position="114"/>
        <end position="146"/>
    </location>
</feature>
<feature type="binding site" evidence="1">
    <location>
        <position position="21"/>
    </location>
    <ligand>
        <name>Ca(2+)</name>
        <dbReference type="ChEBI" id="CHEBI:29108"/>
        <label>1</label>
    </ligand>
</feature>
<feature type="binding site" evidence="1">
    <location>
        <position position="23"/>
    </location>
    <ligand>
        <name>Ca(2+)</name>
        <dbReference type="ChEBI" id="CHEBI:29108"/>
        <label>1</label>
    </ligand>
</feature>
<feature type="binding site" evidence="1">
    <location>
        <position position="25"/>
    </location>
    <ligand>
        <name>Ca(2+)</name>
        <dbReference type="ChEBI" id="CHEBI:29108"/>
        <label>1</label>
    </ligand>
</feature>
<feature type="binding site" evidence="1">
    <location>
        <position position="27"/>
    </location>
    <ligand>
        <name>Ca(2+)</name>
        <dbReference type="ChEBI" id="CHEBI:29108"/>
        <label>1</label>
    </ligand>
</feature>
<feature type="binding site" evidence="1">
    <location>
        <position position="32"/>
    </location>
    <ligand>
        <name>Ca(2+)</name>
        <dbReference type="ChEBI" id="CHEBI:29108"/>
        <label>1</label>
    </ligand>
</feature>
<feature type="binding site" evidence="1">
    <location>
        <position position="57"/>
    </location>
    <ligand>
        <name>Ca(2+)</name>
        <dbReference type="ChEBI" id="CHEBI:29108"/>
        <label>2</label>
    </ligand>
</feature>
<feature type="binding site" evidence="1">
    <location>
        <position position="59"/>
    </location>
    <ligand>
        <name>Ca(2+)</name>
        <dbReference type="ChEBI" id="CHEBI:29108"/>
        <label>2</label>
    </ligand>
</feature>
<feature type="binding site" evidence="1">
    <location>
        <position position="61"/>
    </location>
    <ligand>
        <name>Ca(2+)</name>
        <dbReference type="ChEBI" id="CHEBI:29108"/>
        <label>2</label>
    </ligand>
</feature>
<feature type="binding site" evidence="1">
    <location>
        <position position="63"/>
    </location>
    <ligand>
        <name>Ca(2+)</name>
        <dbReference type="ChEBI" id="CHEBI:29108"/>
        <label>2</label>
    </ligand>
</feature>
<feature type="binding site" evidence="1">
    <location>
        <position position="68"/>
    </location>
    <ligand>
        <name>Ca(2+)</name>
        <dbReference type="ChEBI" id="CHEBI:29108"/>
        <label>2</label>
    </ligand>
</feature>
<feature type="binding site" evidence="1">
    <location>
        <position position="91"/>
    </location>
    <ligand>
        <name>Ca(2+)</name>
        <dbReference type="ChEBI" id="CHEBI:29108"/>
        <label>3</label>
    </ligand>
</feature>
<feature type="binding site" evidence="1">
    <location>
        <position position="93"/>
    </location>
    <ligand>
        <name>Ca(2+)</name>
        <dbReference type="ChEBI" id="CHEBI:29108"/>
        <label>3</label>
    </ligand>
</feature>
<feature type="binding site" evidence="1">
    <location>
        <position position="95"/>
    </location>
    <ligand>
        <name>Ca(2+)</name>
        <dbReference type="ChEBI" id="CHEBI:29108"/>
        <label>3</label>
    </ligand>
</feature>
<feature type="binding site" evidence="1">
    <location>
        <position position="97"/>
    </location>
    <ligand>
        <name>Ca(2+)</name>
        <dbReference type="ChEBI" id="CHEBI:29108"/>
        <label>3</label>
    </ligand>
</feature>
<feature type="binding site" evidence="1">
    <location>
        <position position="102"/>
    </location>
    <ligand>
        <name>Ca(2+)</name>
        <dbReference type="ChEBI" id="CHEBI:29108"/>
        <label>3</label>
    </ligand>
</feature>
<feature type="binding site" evidence="1">
    <location>
        <position position="127"/>
    </location>
    <ligand>
        <name>Ca(2+)</name>
        <dbReference type="ChEBI" id="CHEBI:29108"/>
        <label>4</label>
    </ligand>
</feature>
<feature type="binding site" evidence="1">
    <location>
        <position position="129"/>
    </location>
    <ligand>
        <name>Ca(2+)</name>
        <dbReference type="ChEBI" id="CHEBI:29108"/>
        <label>4</label>
    </ligand>
</feature>
<feature type="binding site" evidence="1">
    <location>
        <position position="131"/>
    </location>
    <ligand>
        <name>Ca(2+)</name>
        <dbReference type="ChEBI" id="CHEBI:29108"/>
        <label>4</label>
    </ligand>
</feature>
<feature type="binding site" evidence="1">
    <location>
        <position position="133"/>
    </location>
    <ligand>
        <name>Ca(2+)</name>
        <dbReference type="ChEBI" id="CHEBI:29108"/>
        <label>4</label>
    </ligand>
</feature>
<feature type="binding site" evidence="1">
    <location>
        <position position="138"/>
    </location>
    <ligand>
        <name>Ca(2+)</name>
        <dbReference type="ChEBI" id="CHEBI:29108"/>
        <label>4</label>
    </ligand>
</feature>
<feature type="modified residue" description="N-acetylalanine" evidence="5">
    <location>
        <position position="2"/>
    </location>
</feature>
<feature type="sequence variant" id="VAR_047545" description="Confirmed at protein level; dbSNP:rs11546426." evidence="3 4">
    <original>S</original>
    <variation>G</variation>
    <location>
        <position position="58"/>
    </location>
</feature>
<feature type="sequence variant" id="VAR_047546" description="Confirmed at protein level; dbSNP:rs10904516." evidence="2 3 4">
    <original>K</original>
    <variation>R</variation>
    <location>
        <position position="74"/>
    </location>
</feature>
<feature type="helix" evidence="6">
    <location>
        <begin position="80"/>
        <end position="87"/>
    </location>
</feature>
<feature type="strand" evidence="6">
    <location>
        <begin position="93"/>
        <end position="99"/>
    </location>
</feature>
<feature type="helix" evidence="6">
    <location>
        <begin position="100"/>
        <end position="106"/>
    </location>
</feature>
<feature type="helix" evidence="6">
    <location>
        <begin position="107"/>
        <end position="109"/>
    </location>
</feature>
<feature type="helix" evidence="6">
    <location>
        <begin position="116"/>
        <end position="125"/>
    </location>
</feature>
<feature type="strand" evidence="6">
    <location>
        <begin position="128"/>
        <end position="135"/>
    </location>
</feature>
<feature type="helix" evidence="6">
    <location>
        <begin position="138"/>
        <end position="143"/>
    </location>
</feature>
<evidence type="ECO:0000255" key="1">
    <source>
        <dbReference type="PROSITE-ProRule" id="PRU00448"/>
    </source>
</evidence>
<evidence type="ECO:0000269" key="2">
    <source>
    </source>
</evidence>
<evidence type="ECO:0000269" key="3">
    <source>
    </source>
</evidence>
<evidence type="ECO:0000269" key="4">
    <source>
    </source>
</evidence>
<evidence type="ECO:0000269" key="5">
    <source ref="4"/>
</evidence>
<evidence type="ECO:0007829" key="6">
    <source>
        <dbReference type="PDB" id="2B1U"/>
    </source>
</evidence>
<dbReference type="EMBL" id="AF172852">
    <property type="protein sequence ID" value="AAF66821.1"/>
    <property type="molecule type" value="mRNA"/>
</dbReference>
<dbReference type="EMBL" id="AL732437">
    <property type="status" value="NOT_ANNOTATED_CDS"/>
    <property type="molecule type" value="Genomic_DNA"/>
</dbReference>
<dbReference type="EMBL" id="BC039172">
    <property type="protein sequence ID" value="AAH39172.1"/>
    <property type="molecule type" value="mRNA"/>
</dbReference>
<dbReference type="CCDS" id="CCDS7068.1"/>
<dbReference type="RefSeq" id="NP_059118.2">
    <property type="nucleotide sequence ID" value="NM_017422.5"/>
</dbReference>
<dbReference type="PDB" id="2B1U">
    <property type="method" value="NMR"/>
    <property type="chains" value="A=76-146"/>
</dbReference>
<dbReference type="PDBsum" id="2B1U"/>
<dbReference type="SMR" id="Q9NZT1"/>
<dbReference type="BioGRID" id="119732">
    <property type="interactions" value="248"/>
</dbReference>
<dbReference type="FunCoup" id="Q9NZT1">
    <property type="interactions" value="2251"/>
</dbReference>
<dbReference type="IntAct" id="Q9NZT1">
    <property type="interactions" value="116"/>
</dbReference>
<dbReference type="MINT" id="Q9NZT1"/>
<dbReference type="STRING" id="9606.ENSP00000369689"/>
<dbReference type="GlyGen" id="Q9NZT1">
    <property type="glycosylation" value="2 sites, 1 N-linked glycan (1 site), 1 O-linked glycan (1 site)"/>
</dbReference>
<dbReference type="iPTMnet" id="Q9NZT1"/>
<dbReference type="PhosphoSitePlus" id="Q9NZT1"/>
<dbReference type="SwissPalm" id="Q9NZT1"/>
<dbReference type="BioMuta" id="CALML5"/>
<dbReference type="DMDM" id="215273944"/>
<dbReference type="jPOST" id="Q9NZT1"/>
<dbReference type="MassIVE" id="Q9NZT1"/>
<dbReference type="PaxDb" id="9606-ENSP00000369689"/>
<dbReference type="PeptideAtlas" id="Q9NZT1"/>
<dbReference type="PRIDE" id="Q9NZT1"/>
<dbReference type="ProteomicsDB" id="83506"/>
<dbReference type="TopDownProteomics" id="Q9NZT1"/>
<dbReference type="Antibodypedia" id="24103">
    <property type="antibodies" value="201 antibodies from 26 providers"/>
</dbReference>
<dbReference type="DNASU" id="51806"/>
<dbReference type="Ensembl" id="ENST00000380332.5">
    <property type="protein sequence ID" value="ENSP00000369689.3"/>
    <property type="gene ID" value="ENSG00000178372.8"/>
</dbReference>
<dbReference type="GeneID" id="51806"/>
<dbReference type="KEGG" id="hsa:51806"/>
<dbReference type="MANE-Select" id="ENST00000380332.5">
    <property type="protein sequence ID" value="ENSP00000369689.3"/>
    <property type="RefSeq nucleotide sequence ID" value="NM_017422.5"/>
    <property type="RefSeq protein sequence ID" value="NP_059118.2"/>
</dbReference>
<dbReference type="UCSC" id="uc001iic.3">
    <property type="organism name" value="human"/>
</dbReference>
<dbReference type="AGR" id="HGNC:18180"/>
<dbReference type="CTD" id="51806"/>
<dbReference type="DisGeNET" id="51806"/>
<dbReference type="GeneCards" id="CALML5"/>
<dbReference type="HGNC" id="HGNC:18180">
    <property type="gene designation" value="CALML5"/>
</dbReference>
<dbReference type="HPA" id="ENSG00000178372">
    <property type="expression patterns" value="Tissue enriched (skin)"/>
</dbReference>
<dbReference type="MIM" id="605183">
    <property type="type" value="gene"/>
</dbReference>
<dbReference type="neXtProt" id="NX_Q9NZT1"/>
<dbReference type="OpenTargets" id="ENSG00000178372"/>
<dbReference type="PharmGKB" id="PA134862009"/>
<dbReference type="VEuPathDB" id="HostDB:ENSG00000178372"/>
<dbReference type="eggNOG" id="KOG0027">
    <property type="taxonomic scope" value="Eukaryota"/>
</dbReference>
<dbReference type="GeneTree" id="ENSGT00940000163406"/>
<dbReference type="HOGENOM" id="CLU_061288_2_0_1"/>
<dbReference type="InParanoid" id="Q9NZT1"/>
<dbReference type="OMA" id="VKRMKSW"/>
<dbReference type="OrthoDB" id="26525at2759"/>
<dbReference type="PAN-GO" id="Q9NZT1">
    <property type="GO annotations" value="2 GO annotations based on evolutionary models"/>
</dbReference>
<dbReference type="PhylomeDB" id="Q9NZT1"/>
<dbReference type="TreeFam" id="TF300912"/>
<dbReference type="PathwayCommons" id="Q9NZT1"/>
<dbReference type="Reactome" id="R-HSA-6798695">
    <property type="pathway name" value="Neutrophil degranulation"/>
</dbReference>
<dbReference type="Reactome" id="R-HSA-9725554">
    <property type="pathway name" value="Differentiation of Keratinocytes in Interfollicular Epidermis in Mammalian Skin"/>
</dbReference>
<dbReference type="SignaLink" id="Q9NZT1"/>
<dbReference type="BioGRID-ORCS" id="51806">
    <property type="hits" value="10 hits in 1129 CRISPR screens"/>
</dbReference>
<dbReference type="CD-CODE" id="DEE660B4">
    <property type="entry name" value="Stress granule"/>
</dbReference>
<dbReference type="EvolutionaryTrace" id="Q9NZT1"/>
<dbReference type="GeneWiki" id="CALML5"/>
<dbReference type="GenomeRNAi" id="51806"/>
<dbReference type="Pharos" id="Q9NZT1">
    <property type="development level" value="Tbio"/>
</dbReference>
<dbReference type="PRO" id="PR:Q9NZT1"/>
<dbReference type="Proteomes" id="UP000005640">
    <property type="component" value="Chromosome 10"/>
</dbReference>
<dbReference type="RNAct" id="Q9NZT1">
    <property type="molecule type" value="protein"/>
</dbReference>
<dbReference type="Bgee" id="ENSG00000178372">
    <property type="expression patterns" value="Expressed in skin of abdomen and 86 other cell types or tissues"/>
</dbReference>
<dbReference type="GO" id="GO:0005737">
    <property type="term" value="C:cytoplasm"/>
    <property type="evidence" value="ECO:0000318"/>
    <property type="project" value="GO_Central"/>
</dbReference>
<dbReference type="GO" id="GO:0005576">
    <property type="term" value="C:extracellular region"/>
    <property type="evidence" value="ECO:0000304"/>
    <property type="project" value="Reactome"/>
</dbReference>
<dbReference type="GO" id="GO:1904813">
    <property type="term" value="C:ficolin-1-rich granule lumen"/>
    <property type="evidence" value="ECO:0000304"/>
    <property type="project" value="Reactome"/>
</dbReference>
<dbReference type="GO" id="GO:0005509">
    <property type="term" value="F:calcium ion binding"/>
    <property type="evidence" value="ECO:0000318"/>
    <property type="project" value="GO_Central"/>
</dbReference>
<dbReference type="GO" id="GO:0030234">
    <property type="term" value="F:enzyme regulator activity"/>
    <property type="evidence" value="ECO:0000318"/>
    <property type="project" value="GO_Central"/>
</dbReference>
<dbReference type="GO" id="GO:0008544">
    <property type="term" value="P:epidermis development"/>
    <property type="evidence" value="ECO:0000304"/>
    <property type="project" value="ProtInc"/>
</dbReference>
<dbReference type="GO" id="GO:0000226">
    <property type="term" value="P:microtubule cytoskeleton organization"/>
    <property type="evidence" value="ECO:0000318"/>
    <property type="project" value="GO_Central"/>
</dbReference>
<dbReference type="GO" id="GO:0007165">
    <property type="term" value="P:signal transduction"/>
    <property type="evidence" value="ECO:0000304"/>
    <property type="project" value="ProtInc"/>
</dbReference>
<dbReference type="FunFam" id="1.10.238.10:FF:000181">
    <property type="entry name" value="CALML5 isoform 1"/>
    <property type="match status" value="1"/>
</dbReference>
<dbReference type="FunFam" id="1.10.238.10:FF:000251">
    <property type="entry name" value="Calmodulin-related protein 97A"/>
    <property type="match status" value="1"/>
</dbReference>
<dbReference type="Gene3D" id="1.10.238.10">
    <property type="entry name" value="EF-hand"/>
    <property type="match status" value="2"/>
</dbReference>
<dbReference type="InterPro" id="IPR050230">
    <property type="entry name" value="CALM/Myosin/TropC-like"/>
</dbReference>
<dbReference type="InterPro" id="IPR011992">
    <property type="entry name" value="EF-hand-dom_pair"/>
</dbReference>
<dbReference type="InterPro" id="IPR018247">
    <property type="entry name" value="EF_Hand_1_Ca_BS"/>
</dbReference>
<dbReference type="InterPro" id="IPR002048">
    <property type="entry name" value="EF_hand_dom"/>
</dbReference>
<dbReference type="PANTHER" id="PTHR23048:SF59">
    <property type="entry name" value="EF-HAND SUPERFAMILY PROTEIN"/>
    <property type="match status" value="1"/>
</dbReference>
<dbReference type="PANTHER" id="PTHR23048">
    <property type="entry name" value="MYOSIN LIGHT CHAIN 1, 3"/>
    <property type="match status" value="1"/>
</dbReference>
<dbReference type="Pfam" id="PF13499">
    <property type="entry name" value="EF-hand_7"/>
    <property type="match status" value="2"/>
</dbReference>
<dbReference type="SMART" id="SM00054">
    <property type="entry name" value="EFh"/>
    <property type="match status" value="4"/>
</dbReference>
<dbReference type="SUPFAM" id="SSF47473">
    <property type="entry name" value="EF-hand"/>
    <property type="match status" value="1"/>
</dbReference>
<dbReference type="PROSITE" id="PS00018">
    <property type="entry name" value="EF_HAND_1"/>
    <property type="match status" value="4"/>
</dbReference>
<dbReference type="PROSITE" id="PS50222">
    <property type="entry name" value="EF_HAND_2"/>
    <property type="match status" value="4"/>
</dbReference>
<protein>
    <recommendedName>
        <fullName>Calmodulin-like protein 5</fullName>
    </recommendedName>
    <alternativeName>
        <fullName>Calmodulin-like skin protein</fullName>
    </alternativeName>
</protein>
<organism>
    <name type="scientific">Homo sapiens</name>
    <name type="common">Human</name>
    <dbReference type="NCBI Taxonomy" id="9606"/>
    <lineage>
        <taxon>Eukaryota</taxon>
        <taxon>Metazoa</taxon>
        <taxon>Chordata</taxon>
        <taxon>Craniata</taxon>
        <taxon>Vertebrata</taxon>
        <taxon>Euteleostomi</taxon>
        <taxon>Mammalia</taxon>
        <taxon>Eutheria</taxon>
        <taxon>Euarchontoglires</taxon>
        <taxon>Primates</taxon>
        <taxon>Haplorrhini</taxon>
        <taxon>Catarrhini</taxon>
        <taxon>Hominidae</taxon>
        <taxon>Homo</taxon>
    </lineage>
</organism>
<accession>Q9NZT1</accession>
<accession>Q5SQI3</accession>
<accession>Q8IXU8</accession>
<proteinExistence type="evidence at protein level"/>
<gene>
    <name type="primary">CALML5</name>
    <name type="synonym">CLSP</name>
</gene>